<organism>
    <name type="scientific">Bos taurus</name>
    <name type="common">Bovine</name>
    <dbReference type="NCBI Taxonomy" id="9913"/>
    <lineage>
        <taxon>Eukaryota</taxon>
        <taxon>Metazoa</taxon>
        <taxon>Chordata</taxon>
        <taxon>Craniata</taxon>
        <taxon>Vertebrata</taxon>
        <taxon>Euteleostomi</taxon>
        <taxon>Mammalia</taxon>
        <taxon>Eutheria</taxon>
        <taxon>Laurasiatheria</taxon>
        <taxon>Artiodactyla</taxon>
        <taxon>Ruminantia</taxon>
        <taxon>Pecora</taxon>
        <taxon>Bovidae</taxon>
        <taxon>Bovinae</taxon>
        <taxon>Bos</taxon>
    </lineage>
</organism>
<gene>
    <name type="primary">ANXA5</name>
    <name type="synonym">ANX5</name>
</gene>
<name>ANXA5_BOVIN</name>
<feature type="initiator methionine" description="Removed" evidence="5">
    <location>
        <position position="1"/>
    </location>
</feature>
<feature type="chain" id="PRO_0000067486" description="Annexin A5">
    <location>
        <begin position="2"/>
        <end position="321"/>
    </location>
</feature>
<feature type="repeat" description="Annexin 1" evidence="4">
    <location>
        <begin position="15"/>
        <end position="86"/>
    </location>
</feature>
<feature type="repeat" description="Annexin 2" evidence="4">
    <location>
        <begin position="87"/>
        <end position="158"/>
    </location>
</feature>
<feature type="repeat" description="Annexin 3" evidence="4">
    <location>
        <begin position="170"/>
        <end position="242"/>
    </location>
</feature>
<feature type="repeat" description="Annexin 4" evidence="4">
    <location>
        <begin position="246"/>
        <end position="317"/>
    </location>
</feature>
<feature type="short sequence motif" description="[IL]-x-C-x-x-[DE] motif" evidence="2">
    <location>
        <begin position="314"/>
        <end position="320"/>
    </location>
</feature>
<feature type="modified residue" description="N-acetylalanine" evidence="5">
    <location>
        <position position="2"/>
    </location>
</feature>
<feature type="modified residue" description="N6-acetyllysine" evidence="2">
    <location>
        <position position="70"/>
    </location>
</feature>
<feature type="modified residue" description="N6-acetyllysine" evidence="2">
    <location>
        <position position="76"/>
    </location>
</feature>
<feature type="modified residue" description="N6-acetyllysine" evidence="2">
    <location>
        <position position="79"/>
    </location>
</feature>
<feature type="modified residue" description="N6-acetyllysine" evidence="2">
    <location>
        <position position="97"/>
    </location>
</feature>
<feature type="modified residue" description="N6-acetyllysine" evidence="2">
    <location>
        <position position="101"/>
    </location>
</feature>
<feature type="modified residue" description="N6-succinyllysine" evidence="3">
    <location>
        <position position="290"/>
    </location>
</feature>
<feature type="cross-link" description="Glycyl lysine isopeptide (Lys-Gly) (interchain with G-Cter in SUMO1); alternate" evidence="2">
    <location>
        <position position="29"/>
    </location>
</feature>
<feature type="cross-link" description="Glycyl lysine isopeptide (Lys-Gly) (interchain with G-Cter in SUMO2); alternate" evidence="2">
    <location>
        <position position="29"/>
    </location>
</feature>
<feature type="sequence variant" evidence="5 6">
    <original>T</original>
    <variation>S</variation>
    <location>
        <position position="37"/>
    </location>
</feature>
<feature type="sequence variant" evidence="5 6">
    <original>E</original>
    <variation>K</variation>
    <location>
        <position position="126"/>
    </location>
</feature>
<feature type="sequence conflict" description="In Ref. 2; AAI02236." evidence="7" ref="2">
    <original>S</original>
    <variation>T</variation>
    <location>
        <position position="135"/>
    </location>
</feature>
<comment type="function">
    <text>This protein is an anticoagulant protein that acts as an indirect inhibitor of the thromboplastin-specific complex, which is involved in the blood coagulation cascade.</text>
</comment>
<comment type="subunit">
    <text evidence="1">Monomer. Binds ATRX and EIF5B (By similarity).</text>
</comment>
<comment type="domain">
    <text>A pair of annexin repeats may form one binding site for calcium and phospholipid.</text>
</comment>
<comment type="domain">
    <text evidence="2">The [IL]-x-C-x-x-[DE] motif is a proposed target motif for cysteine S-nitrosylation mediated by the iNOS-S100A8/A9 transnitrosylase complex.</text>
</comment>
<comment type="PTM">
    <text evidence="2">S-nitrosylation is induced by interferon-gamma and oxidatively-modified low-densitity lipoprotein (LDL(ox)) possibly implicating the iNOS-S100A8/9 transnitrosylase complex.</text>
</comment>
<comment type="similarity">
    <text evidence="4 7">Belongs to the annexin family.</text>
</comment>
<sequence>MAQVLRGTVADFPGFDERADAETLRKAMKGLGTDEETILTLLTSRSNAQRQEIAVAFKTLFGRDLLDDLKSELTGKFEKLIVALMKPSRLYDAYELKHALKGAGTDEKVLTEIIASRTPEELRAIEQVYEEEYGSSLEDDVVGDTSGYYQRMLVVLLQANRDPDARIDEAQVEQDAQALFQAGELKWGTDEEKFITIFGTRSVSHLRRVFDKYMTISGFQIEETIDRETSGNLEQLLLAVVKSIRSIPAYLAETLYYAMKGAGTDDHTLIRVVVSRSEIDLYNIRKEFRKNFGTSLYSMIKGDTSGDYKKALLLLCGGEDD</sequence>
<protein>
    <recommendedName>
        <fullName>Annexin A5</fullName>
    </recommendedName>
    <alternativeName>
        <fullName>Anchorin CII</fullName>
    </alternativeName>
    <alternativeName>
        <fullName>Annexin V</fullName>
    </alternativeName>
    <alternativeName>
        <fullName>Annexin-5</fullName>
    </alternativeName>
    <alternativeName>
        <fullName>Calphobindin I</fullName>
        <shortName>CPB-I</shortName>
    </alternativeName>
    <alternativeName>
        <fullName>Endonexin II</fullName>
    </alternativeName>
    <alternativeName>
        <fullName>Lipocortin V</fullName>
    </alternativeName>
    <alternativeName>
        <fullName>Placental anticoagulant protein 4</fullName>
    </alternativeName>
    <alternativeName>
        <fullName>Placental anticoagulant protein I</fullName>
        <shortName>PAP-I</shortName>
    </alternativeName>
    <alternativeName>
        <fullName>Thromboplastin inhibitor</fullName>
    </alternativeName>
    <alternativeName>
        <fullName>Vascular anticoagulant-alpha</fullName>
        <shortName>VAC-alpha</shortName>
    </alternativeName>
</protein>
<accession>P81287</accession>
<accession>Q3ZCH7</accession>
<accession>Q5E9B9</accession>
<dbReference type="EMBL" id="BT021001">
    <property type="protein sequence ID" value="AAX09018.1"/>
    <property type="molecule type" value="mRNA"/>
</dbReference>
<dbReference type="EMBL" id="BC102235">
    <property type="protein sequence ID" value="AAI02236.1"/>
    <property type="molecule type" value="mRNA"/>
</dbReference>
<dbReference type="PIR" id="S27214">
    <property type="entry name" value="S27214"/>
</dbReference>
<dbReference type="SMR" id="P81287"/>
<dbReference type="FunCoup" id="P81287">
    <property type="interactions" value="972"/>
</dbReference>
<dbReference type="IntAct" id="P81287">
    <property type="interactions" value="1"/>
</dbReference>
<dbReference type="STRING" id="9913.ENSBTAP00000028988"/>
<dbReference type="ChEMBL" id="CHEMBL3308974"/>
<dbReference type="iPTMnet" id="P81287"/>
<dbReference type="PaxDb" id="9913-ENSBTAP00000028988"/>
<dbReference type="PeptideAtlas" id="P81287"/>
<dbReference type="eggNOG" id="KOG0819">
    <property type="taxonomic scope" value="Eukaryota"/>
</dbReference>
<dbReference type="InParanoid" id="P81287"/>
<dbReference type="OrthoDB" id="37886at2759"/>
<dbReference type="Proteomes" id="UP000009136">
    <property type="component" value="Unplaced"/>
</dbReference>
<dbReference type="GO" id="GO:0005737">
    <property type="term" value="C:cytoplasm"/>
    <property type="evidence" value="ECO:0000318"/>
    <property type="project" value="GO_Central"/>
</dbReference>
<dbReference type="GO" id="GO:0005622">
    <property type="term" value="C:intracellular anatomical structure"/>
    <property type="evidence" value="ECO:0000250"/>
    <property type="project" value="AgBase"/>
</dbReference>
<dbReference type="GO" id="GO:0042383">
    <property type="term" value="C:sarcolemma"/>
    <property type="evidence" value="ECO:0000318"/>
    <property type="project" value="GO_Central"/>
</dbReference>
<dbReference type="GO" id="GO:0012506">
    <property type="term" value="C:vesicle membrane"/>
    <property type="evidence" value="ECO:0000318"/>
    <property type="project" value="GO_Central"/>
</dbReference>
<dbReference type="GO" id="GO:0005509">
    <property type="term" value="F:calcium ion binding"/>
    <property type="evidence" value="ECO:0007669"/>
    <property type="project" value="InterPro"/>
</dbReference>
<dbReference type="GO" id="GO:0005544">
    <property type="term" value="F:calcium-dependent phospholipid binding"/>
    <property type="evidence" value="ECO:0000318"/>
    <property type="project" value="GO_Central"/>
</dbReference>
<dbReference type="GO" id="GO:0008201">
    <property type="term" value="F:heparin binding"/>
    <property type="evidence" value="ECO:0000314"/>
    <property type="project" value="AgBase"/>
</dbReference>
<dbReference type="GO" id="GO:0001786">
    <property type="term" value="F:phosphatidylserine binding"/>
    <property type="evidence" value="ECO:0000314"/>
    <property type="project" value="UniProtKB"/>
</dbReference>
<dbReference type="GO" id="GO:0007596">
    <property type="term" value="P:blood coagulation"/>
    <property type="evidence" value="ECO:0007669"/>
    <property type="project" value="UniProtKB-KW"/>
</dbReference>
<dbReference type="GO" id="GO:0050819">
    <property type="term" value="P:negative regulation of coagulation"/>
    <property type="evidence" value="ECO:0007669"/>
    <property type="project" value="InterPro"/>
</dbReference>
<dbReference type="GO" id="GO:0051283">
    <property type="term" value="P:negative regulation of sequestering of calcium ion"/>
    <property type="evidence" value="ECO:0000314"/>
    <property type="project" value="AgBase"/>
</dbReference>
<dbReference type="FunFam" id="1.10.220.10:FF:000002">
    <property type="entry name" value="Annexin"/>
    <property type="match status" value="1"/>
</dbReference>
<dbReference type="FunFam" id="1.10.220.10:FF:000003">
    <property type="entry name" value="Annexin"/>
    <property type="match status" value="1"/>
</dbReference>
<dbReference type="FunFam" id="1.10.220.10:FF:000004">
    <property type="entry name" value="Annexin"/>
    <property type="match status" value="1"/>
</dbReference>
<dbReference type="FunFam" id="1.10.220.10:FF:000022">
    <property type="entry name" value="Annexin A5"/>
    <property type="match status" value="1"/>
</dbReference>
<dbReference type="Gene3D" id="1.10.220.10">
    <property type="entry name" value="Annexin"/>
    <property type="match status" value="4"/>
</dbReference>
<dbReference type="InterPro" id="IPR001464">
    <property type="entry name" value="Annexin"/>
</dbReference>
<dbReference type="InterPro" id="IPR018502">
    <property type="entry name" value="Annexin_repeat"/>
</dbReference>
<dbReference type="InterPro" id="IPR018252">
    <property type="entry name" value="Annexin_repeat_CS"/>
</dbReference>
<dbReference type="InterPro" id="IPR037104">
    <property type="entry name" value="Annexin_sf"/>
</dbReference>
<dbReference type="InterPro" id="IPR002392">
    <property type="entry name" value="ANX5"/>
</dbReference>
<dbReference type="PANTHER" id="PTHR10502">
    <property type="entry name" value="ANNEXIN"/>
    <property type="match status" value="1"/>
</dbReference>
<dbReference type="PANTHER" id="PTHR10502:SF26">
    <property type="entry name" value="ANNEXIN A5"/>
    <property type="match status" value="1"/>
</dbReference>
<dbReference type="Pfam" id="PF00191">
    <property type="entry name" value="Annexin"/>
    <property type="match status" value="4"/>
</dbReference>
<dbReference type="PRINTS" id="PR00196">
    <property type="entry name" value="ANNEXIN"/>
</dbReference>
<dbReference type="PRINTS" id="PR00201">
    <property type="entry name" value="ANNEXINV"/>
</dbReference>
<dbReference type="SMART" id="SM00335">
    <property type="entry name" value="ANX"/>
    <property type="match status" value="4"/>
</dbReference>
<dbReference type="SUPFAM" id="SSF47874">
    <property type="entry name" value="Annexin"/>
    <property type="match status" value="1"/>
</dbReference>
<dbReference type="PROSITE" id="PS00223">
    <property type="entry name" value="ANNEXIN_1"/>
    <property type="match status" value="4"/>
</dbReference>
<dbReference type="PROSITE" id="PS51897">
    <property type="entry name" value="ANNEXIN_2"/>
    <property type="match status" value="4"/>
</dbReference>
<reference key="1">
    <citation type="journal article" date="2005" name="BMC Genomics">
        <title>Characterization of 954 bovine full-CDS cDNA sequences.</title>
        <authorList>
            <person name="Harhay G.P."/>
            <person name="Sonstegard T.S."/>
            <person name="Keele J.W."/>
            <person name="Heaton M.P."/>
            <person name="Clawson M.L."/>
            <person name="Snelling W.M."/>
            <person name="Wiedmann R.T."/>
            <person name="Van Tassell C.P."/>
            <person name="Smith T.P.L."/>
        </authorList>
    </citation>
    <scope>NUCLEOTIDE SEQUENCE [LARGE SCALE MRNA]</scope>
</reference>
<reference key="2">
    <citation type="submission" date="2005-08" db="EMBL/GenBank/DDBJ databases">
        <authorList>
            <consortium name="NIH - Mammalian Gene Collection (MGC) project"/>
        </authorList>
    </citation>
    <scope>NUCLEOTIDE SEQUENCE [LARGE SCALE MRNA]</scope>
    <scope>VARIANTS SER-37 AND LYS-126</scope>
    <source>
        <strain>Hereford</strain>
        <tissue>Mammary gland</tissue>
    </source>
</reference>
<reference key="3">
    <citation type="journal article" date="1992" name="Biochim. Biophys. Acta">
        <title>Novel isoforms of CaBP 33/37 (annexin V) from mammalian brain: structural and phosphorylation differences that suggest distinct biological roles.</title>
        <authorList>
            <person name="Learmonth M.P."/>
            <person name="Howell S.A."/>
            <person name="Harris A.C.M."/>
            <person name="Amess B."/>
            <person name="Patel Y."/>
            <person name="Giambanco I."/>
            <person name="Bianchi R."/>
            <person name="Pula G."/>
            <person name="Ceccarelli P."/>
            <person name="Donato R."/>
            <person name="Green B.N."/>
            <person name="Aitken A."/>
        </authorList>
    </citation>
    <scope>PROTEIN SEQUENCE OF 2-321</scope>
    <scope>ACETYLATION AT ALA-2</scope>
    <scope>VARIANTS SER-37 AND LYS-126</scope>
    <source>
        <tissue>Brain</tissue>
    </source>
</reference>
<keyword id="KW-0007">Acetylation</keyword>
<keyword id="KW-0041">Annexin</keyword>
<keyword id="KW-0094">Blood coagulation</keyword>
<keyword id="KW-0106">Calcium</keyword>
<keyword id="KW-0111">Calcium/phospholipid-binding</keyword>
<keyword id="KW-0903">Direct protein sequencing</keyword>
<keyword id="KW-0356">Hemostasis</keyword>
<keyword id="KW-1017">Isopeptide bond</keyword>
<keyword id="KW-1185">Reference proteome</keyword>
<keyword id="KW-0677">Repeat</keyword>
<keyword id="KW-0702">S-nitrosylation</keyword>
<keyword id="KW-0832">Ubl conjugation</keyword>
<proteinExistence type="evidence at protein level"/>
<evidence type="ECO:0000250" key="1"/>
<evidence type="ECO:0000250" key="2">
    <source>
        <dbReference type="UniProtKB" id="P08758"/>
    </source>
</evidence>
<evidence type="ECO:0000250" key="3">
    <source>
        <dbReference type="UniProtKB" id="P48036"/>
    </source>
</evidence>
<evidence type="ECO:0000255" key="4">
    <source>
        <dbReference type="PROSITE-ProRule" id="PRU01245"/>
    </source>
</evidence>
<evidence type="ECO:0000269" key="5">
    <source>
    </source>
</evidence>
<evidence type="ECO:0000269" key="6">
    <source ref="2"/>
</evidence>
<evidence type="ECO:0000305" key="7"/>